<organism>
    <name type="scientific">Paraburkholderia phymatum (strain DSM 17167 / CIP 108236 / LMG 21445 / STM815)</name>
    <name type="common">Burkholderia phymatum</name>
    <dbReference type="NCBI Taxonomy" id="391038"/>
    <lineage>
        <taxon>Bacteria</taxon>
        <taxon>Pseudomonadati</taxon>
        <taxon>Pseudomonadota</taxon>
        <taxon>Betaproteobacteria</taxon>
        <taxon>Burkholderiales</taxon>
        <taxon>Burkholderiaceae</taxon>
        <taxon>Paraburkholderia</taxon>
    </lineage>
</organism>
<comment type="function">
    <text evidence="1">An essential GTPase which binds GTP, GDP and possibly (p)ppGpp with moderate affinity, with high nucleotide exchange rates and a fairly low GTP hydrolysis rate. Plays a role in control of the cell cycle, stress response, ribosome biogenesis and in those bacteria that undergo differentiation, in morphogenesis control.</text>
</comment>
<comment type="cofactor">
    <cofactor evidence="1">
        <name>Mg(2+)</name>
        <dbReference type="ChEBI" id="CHEBI:18420"/>
    </cofactor>
</comment>
<comment type="subunit">
    <text evidence="1">Monomer.</text>
</comment>
<comment type="subcellular location">
    <subcellularLocation>
        <location evidence="1">Cytoplasm</location>
    </subcellularLocation>
</comment>
<comment type="similarity">
    <text evidence="1">Belongs to the TRAFAC class OBG-HflX-like GTPase superfamily. OBG GTPase family.</text>
</comment>
<protein>
    <recommendedName>
        <fullName evidence="1">GTPase Obg</fullName>
        <ecNumber evidence="1">3.6.5.-</ecNumber>
    </recommendedName>
    <alternativeName>
        <fullName evidence="1">GTP-binding protein Obg</fullName>
    </alternativeName>
</protein>
<keyword id="KW-0963">Cytoplasm</keyword>
<keyword id="KW-0342">GTP-binding</keyword>
<keyword id="KW-0378">Hydrolase</keyword>
<keyword id="KW-0460">Magnesium</keyword>
<keyword id="KW-0479">Metal-binding</keyword>
<keyword id="KW-0547">Nucleotide-binding</keyword>
<keyword id="KW-1185">Reference proteome</keyword>
<name>OBG_PARP8</name>
<evidence type="ECO:0000255" key="1">
    <source>
        <dbReference type="HAMAP-Rule" id="MF_01454"/>
    </source>
</evidence>
<evidence type="ECO:0000255" key="2">
    <source>
        <dbReference type="PROSITE-ProRule" id="PRU01231"/>
    </source>
</evidence>
<evidence type="ECO:0000256" key="3">
    <source>
        <dbReference type="SAM" id="MobiDB-lite"/>
    </source>
</evidence>
<proteinExistence type="inferred from homology"/>
<dbReference type="EC" id="3.6.5.-" evidence="1"/>
<dbReference type="EMBL" id="CP001043">
    <property type="protein sequence ID" value="ACC71822.1"/>
    <property type="molecule type" value="Genomic_DNA"/>
</dbReference>
<dbReference type="RefSeq" id="WP_012402024.1">
    <property type="nucleotide sequence ID" value="NC_010622.1"/>
</dbReference>
<dbReference type="SMR" id="B2JHD7"/>
<dbReference type="STRING" id="391038.Bphy_2650"/>
<dbReference type="KEGG" id="bph:Bphy_2650"/>
<dbReference type="eggNOG" id="COG0536">
    <property type="taxonomic scope" value="Bacteria"/>
</dbReference>
<dbReference type="HOGENOM" id="CLU_011747_2_0_4"/>
<dbReference type="OrthoDB" id="9807318at2"/>
<dbReference type="Proteomes" id="UP000001192">
    <property type="component" value="Chromosome 1"/>
</dbReference>
<dbReference type="GO" id="GO:0005737">
    <property type="term" value="C:cytoplasm"/>
    <property type="evidence" value="ECO:0007669"/>
    <property type="project" value="UniProtKB-SubCell"/>
</dbReference>
<dbReference type="GO" id="GO:0005525">
    <property type="term" value="F:GTP binding"/>
    <property type="evidence" value="ECO:0007669"/>
    <property type="project" value="UniProtKB-UniRule"/>
</dbReference>
<dbReference type="GO" id="GO:0003924">
    <property type="term" value="F:GTPase activity"/>
    <property type="evidence" value="ECO:0007669"/>
    <property type="project" value="UniProtKB-UniRule"/>
</dbReference>
<dbReference type="GO" id="GO:0000287">
    <property type="term" value="F:magnesium ion binding"/>
    <property type="evidence" value="ECO:0007669"/>
    <property type="project" value="InterPro"/>
</dbReference>
<dbReference type="GO" id="GO:0042254">
    <property type="term" value="P:ribosome biogenesis"/>
    <property type="evidence" value="ECO:0007669"/>
    <property type="project" value="UniProtKB-UniRule"/>
</dbReference>
<dbReference type="CDD" id="cd01898">
    <property type="entry name" value="Obg"/>
    <property type="match status" value="1"/>
</dbReference>
<dbReference type="FunFam" id="2.70.210.12:FF:000001">
    <property type="entry name" value="GTPase Obg"/>
    <property type="match status" value="1"/>
</dbReference>
<dbReference type="Gene3D" id="2.70.210.12">
    <property type="entry name" value="GTP1/OBG domain"/>
    <property type="match status" value="1"/>
</dbReference>
<dbReference type="Gene3D" id="3.40.50.300">
    <property type="entry name" value="P-loop containing nucleotide triphosphate hydrolases"/>
    <property type="match status" value="1"/>
</dbReference>
<dbReference type="HAMAP" id="MF_01454">
    <property type="entry name" value="GTPase_Obg"/>
    <property type="match status" value="1"/>
</dbReference>
<dbReference type="InterPro" id="IPR031167">
    <property type="entry name" value="G_OBG"/>
</dbReference>
<dbReference type="InterPro" id="IPR006073">
    <property type="entry name" value="GTP-bd"/>
</dbReference>
<dbReference type="InterPro" id="IPR014100">
    <property type="entry name" value="GTP-bd_Obg/CgtA"/>
</dbReference>
<dbReference type="InterPro" id="IPR006074">
    <property type="entry name" value="GTP1-OBG_CS"/>
</dbReference>
<dbReference type="InterPro" id="IPR006169">
    <property type="entry name" value="GTP1_OBG_dom"/>
</dbReference>
<dbReference type="InterPro" id="IPR036726">
    <property type="entry name" value="GTP1_OBG_dom_sf"/>
</dbReference>
<dbReference type="InterPro" id="IPR045086">
    <property type="entry name" value="OBG_GTPase"/>
</dbReference>
<dbReference type="InterPro" id="IPR027417">
    <property type="entry name" value="P-loop_NTPase"/>
</dbReference>
<dbReference type="NCBIfam" id="TIGR02729">
    <property type="entry name" value="Obg_CgtA"/>
    <property type="match status" value="1"/>
</dbReference>
<dbReference type="NCBIfam" id="NF008954">
    <property type="entry name" value="PRK12296.1"/>
    <property type="match status" value="1"/>
</dbReference>
<dbReference type="NCBIfam" id="NF008955">
    <property type="entry name" value="PRK12297.1"/>
    <property type="match status" value="1"/>
</dbReference>
<dbReference type="NCBIfam" id="NF008956">
    <property type="entry name" value="PRK12299.1"/>
    <property type="match status" value="1"/>
</dbReference>
<dbReference type="PANTHER" id="PTHR11702">
    <property type="entry name" value="DEVELOPMENTALLY REGULATED GTP-BINDING PROTEIN-RELATED"/>
    <property type="match status" value="1"/>
</dbReference>
<dbReference type="PANTHER" id="PTHR11702:SF31">
    <property type="entry name" value="MITOCHONDRIAL RIBOSOME-ASSOCIATED GTPASE 2"/>
    <property type="match status" value="1"/>
</dbReference>
<dbReference type="Pfam" id="PF01018">
    <property type="entry name" value="GTP1_OBG"/>
    <property type="match status" value="1"/>
</dbReference>
<dbReference type="Pfam" id="PF01926">
    <property type="entry name" value="MMR_HSR1"/>
    <property type="match status" value="1"/>
</dbReference>
<dbReference type="PIRSF" id="PIRSF002401">
    <property type="entry name" value="GTP_bd_Obg/CgtA"/>
    <property type="match status" value="1"/>
</dbReference>
<dbReference type="PRINTS" id="PR00326">
    <property type="entry name" value="GTP1OBG"/>
</dbReference>
<dbReference type="SUPFAM" id="SSF82051">
    <property type="entry name" value="Obg GTP-binding protein N-terminal domain"/>
    <property type="match status" value="1"/>
</dbReference>
<dbReference type="SUPFAM" id="SSF52540">
    <property type="entry name" value="P-loop containing nucleoside triphosphate hydrolases"/>
    <property type="match status" value="1"/>
</dbReference>
<dbReference type="PROSITE" id="PS51710">
    <property type="entry name" value="G_OBG"/>
    <property type="match status" value="1"/>
</dbReference>
<dbReference type="PROSITE" id="PS00905">
    <property type="entry name" value="GTP1_OBG"/>
    <property type="match status" value="1"/>
</dbReference>
<dbReference type="PROSITE" id="PS51883">
    <property type="entry name" value="OBG"/>
    <property type="match status" value="1"/>
</dbReference>
<sequence length="370" mass="39985">MKFIDEARIEVIAGDGGDGSASMRREKFVPFGGPDGGDGGRGGSVYAVADRNINTLIDYRYSKKHQARNGENGRGSDCYGKGGDDITLRMPVGTIITDMDTGELIADLTEHNQTVRIAEGGAGGLGNLHFKSSTNRAPRQKTDGKPGERRMVRLELKVLADVGLLGMPNAGKSTFISSVSNAKPKIADYPFTTLAPNLGVVRVGPSRSFVIADIPGLIEGAAEGAGLGHQFLRHLQRTGLLLHIVDLAPFDETVDPVAEAKAIVNELRKYDEELFSKPRWLVLNKLDMVPEDEREARVAAFLKDFEWDGPVFEISALTGQGCENLCYAVYDYLAEHSDAQRAAEAEDLAADVRFRGQQQGDANAPVGPQE</sequence>
<gene>
    <name evidence="1" type="primary">obg</name>
    <name type="ordered locus">Bphy_2650</name>
</gene>
<reference key="1">
    <citation type="journal article" date="2014" name="Stand. Genomic Sci.">
        <title>Complete genome sequence of Burkholderia phymatum STM815(T), a broad host range and efficient nitrogen-fixing symbiont of Mimosa species.</title>
        <authorList>
            <person name="Moulin L."/>
            <person name="Klonowska A."/>
            <person name="Caroline B."/>
            <person name="Booth K."/>
            <person name="Vriezen J.A."/>
            <person name="Melkonian R."/>
            <person name="James E.K."/>
            <person name="Young J.P."/>
            <person name="Bena G."/>
            <person name="Hauser L."/>
            <person name="Land M."/>
            <person name="Kyrpides N."/>
            <person name="Bruce D."/>
            <person name="Chain P."/>
            <person name="Copeland A."/>
            <person name="Pitluck S."/>
            <person name="Woyke T."/>
            <person name="Lizotte-Waniewski M."/>
            <person name="Bristow J."/>
            <person name="Riley M."/>
        </authorList>
    </citation>
    <scope>NUCLEOTIDE SEQUENCE [LARGE SCALE GENOMIC DNA]</scope>
    <source>
        <strain>DSM 17167 / CIP 108236 / LMG 21445 / STM815</strain>
    </source>
</reference>
<accession>B2JHD7</accession>
<feature type="chain" id="PRO_0000385787" description="GTPase Obg">
    <location>
        <begin position="1"/>
        <end position="370"/>
    </location>
</feature>
<feature type="domain" description="Obg" evidence="2">
    <location>
        <begin position="1"/>
        <end position="159"/>
    </location>
</feature>
<feature type="domain" description="OBG-type G" evidence="1">
    <location>
        <begin position="160"/>
        <end position="334"/>
    </location>
</feature>
<feature type="region of interest" description="Disordered" evidence="3">
    <location>
        <begin position="127"/>
        <end position="147"/>
    </location>
</feature>
<feature type="binding site" evidence="1">
    <location>
        <begin position="166"/>
        <end position="173"/>
    </location>
    <ligand>
        <name>GTP</name>
        <dbReference type="ChEBI" id="CHEBI:37565"/>
    </ligand>
</feature>
<feature type="binding site" evidence="1">
    <location>
        <position position="173"/>
    </location>
    <ligand>
        <name>Mg(2+)</name>
        <dbReference type="ChEBI" id="CHEBI:18420"/>
    </ligand>
</feature>
<feature type="binding site" evidence="1">
    <location>
        <begin position="191"/>
        <end position="195"/>
    </location>
    <ligand>
        <name>GTP</name>
        <dbReference type="ChEBI" id="CHEBI:37565"/>
    </ligand>
</feature>
<feature type="binding site" evidence="1">
    <location>
        <position position="193"/>
    </location>
    <ligand>
        <name>Mg(2+)</name>
        <dbReference type="ChEBI" id="CHEBI:18420"/>
    </ligand>
</feature>
<feature type="binding site" evidence="1">
    <location>
        <begin position="213"/>
        <end position="216"/>
    </location>
    <ligand>
        <name>GTP</name>
        <dbReference type="ChEBI" id="CHEBI:37565"/>
    </ligand>
</feature>
<feature type="binding site" evidence="1">
    <location>
        <begin position="284"/>
        <end position="287"/>
    </location>
    <ligand>
        <name>GTP</name>
        <dbReference type="ChEBI" id="CHEBI:37565"/>
    </ligand>
</feature>
<feature type="binding site" evidence="1">
    <location>
        <begin position="315"/>
        <end position="317"/>
    </location>
    <ligand>
        <name>GTP</name>
        <dbReference type="ChEBI" id="CHEBI:37565"/>
    </ligand>
</feature>